<comment type="function">
    <text evidence="2">Beta toxins bind voltage-independently at site-4 of sodium channels (Nav) and shift the voltage of activation toward more negative potentials thereby affecting sodium channel activation and promoting spontaneous and repetitive firing. Moderately toxic, but very high abundant. Does not target reptilian channels. Does not produce effect when administered to blowfly and cabbage looper larvae. In mice, produces convulsions, tremors, increased ventilation and, subsequently, death.</text>
</comment>
<comment type="subcellular location">
    <subcellularLocation>
        <location>Secreted</location>
    </subcellularLocation>
</comment>
<comment type="tissue specificity">
    <text>Expressed by the venom gland.</text>
</comment>
<comment type="domain">
    <text evidence="3">Has the structural arrangement of an alpha-helix connected to antiparallel beta-sheets by disulfide bonds (CS-alpha/beta).</text>
</comment>
<comment type="mass spectrometry" mass="6543.0" method="MALDI" evidence="2"/>
<comment type="similarity">
    <text evidence="3">Belongs to the long (3 C-C) scorpion toxin superfamily. Sodium channel inhibitor family. Beta subfamily.</text>
</comment>
<evidence type="ECO:0000255" key="1">
    <source>
        <dbReference type="PROSITE-ProRule" id="PRU01210"/>
    </source>
</evidence>
<evidence type="ECO:0000269" key="2">
    <source>
    </source>
</evidence>
<evidence type="ECO:0000305" key="3"/>
<sequence length="58" mass="6548">ADVPGNYPLDKDGNTYKCFLLGGNEECLNVCKLHGVQYGYCYASKCWCEYLEDDKDSV</sequence>
<feature type="chain" id="PRO_0000066791" description="Birtoxin">
    <location>
        <begin position="1"/>
        <end position="58"/>
    </location>
</feature>
<feature type="domain" description="LCN-type CS-alpha/beta" evidence="1">
    <location>
        <begin position="3"/>
        <end position="58"/>
    </location>
</feature>
<feature type="disulfide bond" evidence="1">
    <location>
        <begin position="18"/>
        <end position="41"/>
    </location>
</feature>
<feature type="disulfide bond" evidence="1">
    <location>
        <begin position="27"/>
        <end position="46"/>
    </location>
</feature>
<feature type="disulfide bond" evidence="1">
    <location>
        <begin position="31"/>
        <end position="48"/>
    </location>
</feature>
<accession>P58752</accession>
<proteinExistence type="evidence at protein level"/>
<dbReference type="SMR" id="P58752"/>
<dbReference type="GO" id="GO:0005576">
    <property type="term" value="C:extracellular region"/>
    <property type="evidence" value="ECO:0007669"/>
    <property type="project" value="UniProtKB-SubCell"/>
</dbReference>
<dbReference type="GO" id="GO:0019871">
    <property type="term" value="F:sodium channel inhibitor activity"/>
    <property type="evidence" value="ECO:0007669"/>
    <property type="project" value="InterPro"/>
</dbReference>
<dbReference type="GO" id="GO:0090729">
    <property type="term" value="F:toxin activity"/>
    <property type="evidence" value="ECO:0007669"/>
    <property type="project" value="UniProtKB-KW"/>
</dbReference>
<dbReference type="CDD" id="cd23106">
    <property type="entry name" value="neurotoxins_LC_scorpion"/>
    <property type="match status" value="1"/>
</dbReference>
<dbReference type="Gene3D" id="3.30.30.10">
    <property type="entry name" value="Knottin, scorpion toxin-like"/>
    <property type="match status" value="1"/>
</dbReference>
<dbReference type="InterPro" id="IPR044062">
    <property type="entry name" value="LCN-type_CS_alpha_beta_dom"/>
</dbReference>
<dbReference type="InterPro" id="IPR036574">
    <property type="entry name" value="Scorpion_toxin-like_sf"/>
</dbReference>
<dbReference type="InterPro" id="IPR002061">
    <property type="entry name" value="Scorpion_toxinL/defensin"/>
</dbReference>
<dbReference type="Pfam" id="PF00537">
    <property type="entry name" value="Toxin_3"/>
    <property type="match status" value="1"/>
</dbReference>
<dbReference type="SUPFAM" id="SSF57095">
    <property type="entry name" value="Scorpion toxin-like"/>
    <property type="match status" value="1"/>
</dbReference>
<dbReference type="PROSITE" id="PS51863">
    <property type="entry name" value="LCN_CSAB"/>
    <property type="match status" value="1"/>
</dbReference>
<keyword id="KW-0903">Direct protein sequencing</keyword>
<keyword id="KW-1015">Disulfide bond</keyword>
<keyword id="KW-0872">Ion channel impairing toxin</keyword>
<keyword id="KW-0528">Neurotoxin</keyword>
<keyword id="KW-0964">Secreted</keyword>
<keyword id="KW-0800">Toxin</keyword>
<keyword id="KW-0738">Voltage-gated sodium channel impairing toxin</keyword>
<protein>
    <recommendedName>
        <fullName>Birtoxin</fullName>
    </recommendedName>
</protein>
<reference key="1">
    <citation type="journal article" date="2001" name="Eur. J. Biochem.">
        <title>Isolation and characterization of a novel type of neurotoxic peptide from the venom of the South African scorpion Parabuthus transvaalicus (Buthidae).</title>
        <authorList>
            <person name="Inceoglu A.B."/>
            <person name="Lango J."/>
            <person name="Wu J."/>
            <person name="Hawkins P."/>
            <person name="Southern J."/>
            <person name="Hammock B.D."/>
        </authorList>
    </citation>
    <scope>PROTEIN SEQUENCE</scope>
    <source>
        <tissue>Venom</tissue>
    </source>
</reference>
<reference key="2">
    <citation type="journal article" date="2002" name="Eur. J. Biochem.">
        <title>A single charged surface residue modifies the activity of ikitoxin, a beta-type Na+ channel toxin from Parabuthus transvaalicus.</title>
        <authorList>
            <person name="Inceoglu A.B."/>
            <person name="Hayashida Y."/>
            <person name="Lango J."/>
            <person name="Ishida A.T."/>
            <person name="Hammock B.D."/>
        </authorList>
    </citation>
    <scope>FUNCTION</scope>
    <scope>MASS SPECTROMETRY</scope>
</reference>
<organism>
    <name type="scientific">Parabuthus transvaalicus</name>
    <name type="common">Transvaal thick-tailed scorpion</name>
    <dbReference type="NCBI Taxonomy" id="170972"/>
    <lineage>
        <taxon>Eukaryota</taxon>
        <taxon>Metazoa</taxon>
        <taxon>Ecdysozoa</taxon>
        <taxon>Arthropoda</taxon>
        <taxon>Chelicerata</taxon>
        <taxon>Arachnida</taxon>
        <taxon>Scorpiones</taxon>
        <taxon>Buthida</taxon>
        <taxon>Buthoidea</taxon>
        <taxon>Buthidae</taxon>
        <taxon>Parabuthus</taxon>
    </lineage>
</organism>
<name>BIRT_PARTR</name>